<protein>
    <recommendedName>
        <fullName>Trans-activating transcriptional regulatory protein</fullName>
    </recommendedName>
    <alternativeName>
        <fullName>Immediate early protein 1</fullName>
        <shortName>IE-1</shortName>
    </alternativeName>
</protein>
<comment type="function">
    <text>Regulatory transcriptional protein, which trans-activates gene expression from early baculovirus promoters. Can also trans-activate its own promoter, suggesting that it is autoregulated during normal infection of insect cells.</text>
</comment>
<comment type="alternative products">
    <event type="alternative splicing"/>
    <isoform>
        <id>P22114-1</id>
        <name>1</name>
        <sequence type="displayed"/>
    </isoform>
    <text>2 isoforms may be produced.</text>
</comment>
<comment type="similarity">
    <text evidence="2">Belongs to the nucleopolyhedrovirus IE-1 protein family.</text>
</comment>
<organismHost>
    <name type="scientific">Orgyia pseudotsugata</name>
    <name type="common">Douglas-fir tussock moth</name>
    <dbReference type="NCBI Taxonomy" id="33414"/>
</organismHost>
<proteinExistence type="inferred from homology"/>
<feature type="chain" id="PRO_0000132848" description="Trans-activating transcriptional regulatory protein">
    <location>
        <begin position="1"/>
        <end position="560"/>
    </location>
</feature>
<feature type="region of interest" description="Disordered" evidence="1">
    <location>
        <begin position="1"/>
        <end position="25"/>
    </location>
</feature>
<feature type="region of interest" description="Disordered" evidence="1">
    <location>
        <begin position="99"/>
        <end position="134"/>
    </location>
</feature>
<name>TATR_NPVOP</name>
<keyword id="KW-0025">Alternative splicing</keyword>
<keyword id="KW-0244">Early protein</keyword>
<keyword id="KW-1185">Reference proteome</keyword>
<keyword id="KW-0804">Transcription</keyword>
<keyword id="KW-0805">Transcription regulation</keyword>
<dbReference type="EMBL" id="M63414">
    <property type="protein sequence ID" value="AAA46700.1"/>
    <property type="molecule type" value="Genomic_DNA"/>
</dbReference>
<dbReference type="EMBL" id="U75930">
    <property type="protein sequence ID" value="AAC59144.1"/>
    <property type="molecule type" value="Genomic_DNA"/>
</dbReference>
<dbReference type="PIR" id="A38544">
    <property type="entry name" value="RGNVPM"/>
</dbReference>
<dbReference type="RefSeq" id="NP_046301.1">
    <molecule id="P22114-1"/>
    <property type="nucleotide sequence ID" value="NC_001875.2"/>
</dbReference>
<dbReference type="KEGG" id="vg:912062"/>
<dbReference type="OrthoDB" id="2402at10239"/>
<dbReference type="Proteomes" id="UP000009248">
    <property type="component" value="Genome"/>
</dbReference>
<dbReference type="GO" id="GO:0019079">
    <property type="term" value="P:viral genome replication"/>
    <property type="evidence" value="ECO:0000250"/>
    <property type="project" value="UniProtKB"/>
</dbReference>
<dbReference type="InterPro" id="IPR005092">
    <property type="entry name" value="TATR"/>
</dbReference>
<dbReference type="Pfam" id="PF03430">
    <property type="entry name" value="TATR"/>
    <property type="match status" value="1"/>
</dbReference>
<gene>
    <name type="primary">IE1</name>
    <name type="ORF">ORF145</name>
</gene>
<reference key="1">
    <citation type="journal article" date="1991" name="Virology">
        <title>Identification and characterization of the IE-1 gene of Orgyia pseudotsugata multicapsid nuclear polyhedrosis virus.</title>
        <authorList>
            <person name="Theilmann D.A."/>
            <person name="Stewart S."/>
        </authorList>
    </citation>
    <scope>NUCLEOTIDE SEQUENCE [GENOMIC DNA]</scope>
</reference>
<reference key="2">
    <citation type="journal article" date="1997" name="Virology">
        <title>The sequence of the Orgyia pseudotsugata multinucleocapsid nuclear polyhedrosis virus genome.</title>
        <authorList>
            <person name="Ahrens C.H."/>
            <person name="Russell R.R."/>
            <person name="Funk C.J."/>
            <person name="Evans J."/>
            <person name="Harwood S."/>
            <person name="Rohrmann G.F."/>
        </authorList>
    </citation>
    <scope>NUCLEOTIDE SEQUENCE [LARGE SCALE GENOMIC DNA]</scope>
</reference>
<sequence>MPKNMETLQRSYMGPSTPNHNLFNNATELPDDLNFSTMDVPYDGSMPMNMSSDSLMNLLEDRSKKLACAVDTELARESTASEFVAGFSADSPQAQLAETGAETGAAGGSKRKASEVDSDSDSDDSSKGKKLVNKPKIRQRYKKATIQNRTSLTEERQYSTEICTVAAPDQIAKYFAQDFSAHLNEVKSECQMSANRFSDYISETGYYVFVVKKGDRKPFEVVFAKFVNNATNEYTNNYYMVDNRVFVVSLNNVKFMVSYKLVREQGIDIPPHVNLCNDAQAERTPLNCYFEPVKNAFQATLINHFHLDMFYAQTTFVTLMQAVGENKTNMLLNKLYQMYQDRSLFTLPIMLSRKEPVNENAPQNKNHAFSYVAQIMKYSKNLRFPQGDPTQQVMDRLEEIVTQKSSLTYKYSSVANLLFNRYGRRDNNADALKKVKKEDGNRLLVEQYMSYNENDDTSHNFIVLQFGGVNDERLTIAKRGKEFYWIAGEIKDISVDDLIKKYARNVHHVFRIINVNRRESTTWHNNLLKLLQLLLQNLIRLEDVQRYSDKSDTKFVYKKV</sequence>
<evidence type="ECO:0000256" key="1">
    <source>
        <dbReference type="SAM" id="MobiDB-lite"/>
    </source>
</evidence>
<evidence type="ECO:0000305" key="2"/>
<organism>
    <name type="scientific">Orgyia pseudotsugata multicapsid polyhedrosis virus</name>
    <name type="common">OpMNPV</name>
    <dbReference type="NCBI Taxonomy" id="262177"/>
    <lineage>
        <taxon>Viruses</taxon>
        <taxon>Viruses incertae sedis</taxon>
        <taxon>Naldaviricetes</taxon>
        <taxon>Lefavirales</taxon>
        <taxon>Baculoviridae</taxon>
        <taxon>Alphabaculovirus</taxon>
        <taxon>Alphabaculovirus orpseudotsugatae</taxon>
    </lineage>
</organism>
<accession>P22114</accession>